<name>FMT_ECO45</name>
<evidence type="ECO:0000255" key="1">
    <source>
        <dbReference type="HAMAP-Rule" id="MF_00182"/>
    </source>
</evidence>
<sequence length="315" mass="34217">MSESLRIIFAGTPDFAARHLDALLSSGHNIVGVFTQPDRPAGRGKKLMPSPVKVLAEDKGLPVFQPVSLRPQENQQLVADLQADVMVVVAYGLILPKAVLEMPRLGCINVHGSLLPRWRGAAPIQRSLWAGDAETGVTIMQMDVGLDTGDMLYKLSCPITAEDTSGTLYDKLAELGPQGLITTLKQLADGTAKPEVQDETLVTYAEKLSKEEARIDWSLSAAQLERCIRAFNPWPMSWLEIEGQPVKVWKASVIDTTTKAAPGTILEANKQGIQVATGDGILNLLSMQPAGKKAMSVQDLLNSRREWFVPGNRLA</sequence>
<keyword id="KW-0648">Protein biosynthesis</keyword>
<keyword id="KW-1185">Reference proteome</keyword>
<keyword id="KW-0808">Transferase</keyword>
<reference key="1">
    <citation type="journal article" date="2009" name="PLoS Genet.">
        <title>Organised genome dynamics in the Escherichia coli species results in highly diverse adaptive paths.</title>
        <authorList>
            <person name="Touchon M."/>
            <person name="Hoede C."/>
            <person name="Tenaillon O."/>
            <person name="Barbe V."/>
            <person name="Baeriswyl S."/>
            <person name="Bidet P."/>
            <person name="Bingen E."/>
            <person name="Bonacorsi S."/>
            <person name="Bouchier C."/>
            <person name="Bouvet O."/>
            <person name="Calteau A."/>
            <person name="Chiapello H."/>
            <person name="Clermont O."/>
            <person name="Cruveiller S."/>
            <person name="Danchin A."/>
            <person name="Diard M."/>
            <person name="Dossat C."/>
            <person name="Karoui M.E."/>
            <person name="Frapy E."/>
            <person name="Garry L."/>
            <person name="Ghigo J.M."/>
            <person name="Gilles A.M."/>
            <person name="Johnson J."/>
            <person name="Le Bouguenec C."/>
            <person name="Lescat M."/>
            <person name="Mangenot S."/>
            <person name="Martinez-Jehanne V."/>
            <person name="Matic I."/>
            <person name="Nassif X."/>
            <person name="Oztas S."/>
            <person name="Petit M.A."/>
            <person name="Pichon C."/>
            <person name="Rouy Z."/>
            <person name="Ruf C.S."/>
            <person name="Schneider D."/>
            <person name="Tourret J."/>
            <person name="Vacherie B."/>
            <person name="Vallenet D."/>
            <person name="Medigue C."/>
            <person name="Rocha E.P.C."/>
            <person name="Denamur E."/>
        </authorList>
    </citation>
    <scope>NUCLEOTIDE SEQUENCE [LARGE SCALE GENOMIC DNA]</scope>
    <source>
        <strain>S88 / ExPEC</strain>
    </source>
</reference>
<gene>
    <name evidence="1" type="primary">fmt</name>
    <name type="ordered locus">ECS88_3675</name>
</gene>
<comment type="function">
    <text evidence="1">Attaches a formyl group to the free amino group of methionyl-tRNA(fMet). The formyl group appears to play a dual role in the initiator identity of N-formylmethionyl-tRNA by promoting its recognition by IF2 and preventing the misappropriation of this tRNA by the elongation apparatus.</text>
</comment>
<comment type="catalytic activity">
    <reaction evidence="1">
        <text>L-methionyl-tRNA(fMet) + (6R)-10-formyltetrahydrofolate = N-formyl-L-methionyl-tRNA(fMet) + (6S)-5,6,7,8-tetrahydrofolate + H(+)</text>
        <dbReference type="Rhea" id="RHEA:24380"/>
        <dbReference type="Rhea" id="RHEA-COMP:9952"/>
        <dbReference type="Rhea" id="RHEA-COMP:9953"/>
        <dbReference type="ChEBI" id="CHEBI:15378"/>
        <dbReference type="ChEBI" id="CHEBI:57453"/>
        <dbReference type="ChEBI" id="CHEBI:78530"/>
        <dbReference type="ChEBI" id="CHEBI:78844"/>
        <dbReference type="ChEBI" id="CHEBI:195366"/>
        <dbReference type="EC" id="2.1.2.9"/>
    </reaction>
</comment>
<comment type="similarity">
    <text evidence="1">Belongs to the Fmt family.</text>
</comment>
<accession>B7MCQ3</accession>
<feature type="chain" id="PRO_1000118476" description="Methionyl-tRNA formyltransferase">
    <location>
        <begin position="1"/>
        <end position="315"/>
    </location>
</feature>
<feature type="binding site" evidence="1">
    <location>
        <begin position="113"/>
        <end position="116"/>
    </location>
    <ligand>
        <name>(6S)-5,6,7,8-tetrahydrofolate</name>
        <dbReference type="ChEBI" id="CHEBI:57453"/>
    </ligand>
</feature>
<dbReference type="EC" id="2.1.2.9" evidence="1"/>
<dbReference type="EMBL" id="CU928161">
    <property type="protein sequence ID" value="CAR04892.1"/>
    <property type="molecule type" value="Genomic_DNA"/>
</dbReference>
<dbReference type="RefSeq" id="WP_000004421.1">
    <property type="nucleotide sequence ID" value="NC_011742.1"/>
</dbReference>
<dbReference type="SMR" id="B7MCQ3"/>
<dbReference type="KEGG" id="ecz:ECS88_3675"/>
<dbReference type="HOGENOM" id="CLU_033347_1_2_6"/>
<dbReference type="Proteomes" id="UP000000747">
    <property type="component" value="Chromosome"/>
</dbReference>
<dbReference type="GO" id="GO:0005829">
    <property type="term" value="C:cytosol"/>
    <property type="evidence" value="ECO:0007669"/>
    <property type="project" value="TreeGrafter"/>
</dbReference>
<dbReference type="GO" id="GO:0004479">
    <property type="term" value="F:methionyl-tRNA formyltransferase activity"/>
    <property type="evidence" value="ECO:0007669"/>
    <property type="project" value="UniProtKB-UniRule"/>
</dbReference>
<dbReference type="CDD" id="cd08646">
    <property type="entry name" value="FMT_core_Met-tRNA-FMT_N"/>
    <property type="match status" value="1"/>
</dbReference>
<dbReference type="CDD" id="cd08704">
    <property type="entry name" value="Met_tRNA_FMT_C"/>
    <property type="match status" value="1"/>
</dbReference>
<dbReference type="FunFam" id="3.10.25.10:FF:000001">
    <property type="entry name" value="Methionyl-tRNA formyltransferase"/>
    <property type="match status" value="1"/>
</dbReference>
<dbReference type="FunFam" id="3.40.50.12230:FF:000001">
    <property type="entry name" value="Methionyl-tRNA formyltransferase"/>
    <property type="match status" value="1"/>
</dbReference>
<dbReference type="FunFam" id="3.40.50.170:FF:000003">
    <property type="entry name" value="Methionyl-tRNA formyltransferase"/>
    <property type="match status" value="1"/>
</dbReference>
<dbReference type="Gene3D" id="3.10.25.10">
    <property type="entry name" value="Formyl transferase, C-terminal domain"/>
    <property type="match status" value="1"/>
</dbReference>
<dbReference type="Gene3D" id="3.40.50.170">
    <property type="entry name" value="Formyl transferase, N-terminal domain"/>
    <property type="match status" value="1"/>
</dbReference>
<dbReference type="HAMAP" id="MF_00182">
    <property type="entry name" value="Formyl_trans"/>
    <property type="match status" value="1"/>
</dbReference>
<dbReference type="InterPro" id="IPR005794">
    <property type="entry name" value="Fmt"/>
</dbReference>
<dbReference type="InterPro" id="IPR005793">
    <property type="entry name" value="Formyl_trans_C"/>
</dbReference>
<dbReference type="InterPro" id="IPR037022">
    <property type="entry name" value="Formyl_trans_C_sf"/>
</dbReference>
<dbReference type="InterPro" id="IPR002376">
    <property type="entry name" value="Formyl_transf_N"/>
</dbReference>
<dbReference type="InterPro" id="IPR036477">
    <property type="entry name" value="Formyl_transf_N_sf"/>
</dbReference>
<dbReference type="InterPro" id="IPR011034">
    <property type="entry name" value="Formyl_transferase-like_C_sf"/>
</dbReference>
<dbReference type="InterPro" id="IPR001555">
    <property type="entry name" value="GART_AS"/>
</dbReference>
<dbReference type="InterPro" id="IPR044135">
    <property type="entry name" value="Met-tRNA-FMT_C"/>
</dbReference>
<dbReference type="InterPro" id="IPR041711">
    <property type="entry name" value="Met-tRNA-FMT_N"/>
</dbReference>
<dbReference type="NCBIfam" id="TIGR00460">
    <property type="entry name" value="fmt"/>
    <property type="match status" value="1"/>
</dbReference>
<dbReference type="PANTHER" id="PTHR11138">
    <property type="entry name" value="METHIONYL-TRNA FORMYLTRANSFERASE"/>
    <property type="match status" value="1"/>
</dbReference>
<dbReference type="PANTHER" id="PTHR11138:SF5">
    <property type="entry name" value="METHIONYL-TRNA FORMYLTRANSFERASE, MITOCHONDRIAL"/>
    <property type="match status" value="1"/>
</dbReference>
<dbReference type="Pfam" id="PF02911">
    <property type="entry name" value="Formyl_trans_C"/>
    <property type="match status" value="1"/>
</dbReference>
<dbReference type="Pfam" id="PF00551">
    <property type="entry name" value="Formyl_trans_N"/>
    <property type="match status" value="1"/>
</dbReference>
<dbReference type="SUPFAM" id="SSF50486">
    <property type="entry name" value="FMT C-terminal domain-like"/>
    <property type="match status" value="1"/>
</dbReference>
<dbReference type="SUPFAM" id="SSF53328">
    <property type="entry name" value="Formyltransferase"/>
    <property type="match status" value="1"/>
</dbReference>
<dbReference type="PROSITE" id="PS00373">
    <property type="entry name" value="GART"/>
    <property type="match status" value="1"/>
</dbReference>
<proteinExistence type="inferred from homology"/>
<protein>
    <recommendedName>
        <fullName evidence="1">Methionyl-tRNA formyltransferase</fullName>
        <ecNumber evidence="1">2.1.2.9</ecNumber>
    </recommendedName>
</protein>
<organism>
    <name type="scientific">Escherichia coli O45:K1 (strain S88 / ExPEC)</name>
    <dbReference type="NCBI Taxonomy" id="585035"/>
    <lineage>
        <taxon>Bacteria</taxon>
        <taxon>Pseudomonadati</taxon>
        <taxon>Pseudomonadota</taxon>
        <taxon>Gammaproteobacteria</taxon>
        <taxon>Enterobacterales</taxon>
        <taxon>Enterobacteriaceae</taxon>
        <taxon>Escherichia</taxon>
    </lineage>
</organism>